<evidence type="ECO:0000255" key="1">
    <source>
        <dbReference type="HAMAP-Rule" id="MF_00154"/>
    </source>
</evidence>
<reference key="1">
    <citation type="submission" date="2007-08" db="EMBL/GenBank/DDBJ databases">
        <authorList>
            <consortium name="The Vibrio harveyi Genome Sequencing Project"/>
            <person name="Bassler B."/>
            <person name="Clifton S.W."/>
            <person name="Fulton L."/>
            <person name="Delehaunty K."/>
            <person name="Fronick C."/>
            <person name="Harrison M."/>
            <person name="Markivic C."/>
            <person name="Fulton R."/>
            <person name="Tin-Wollam A.-M."/>
            <person name="Shah N."/>
            <person name="Pepin K."/>
            <person name="Nash W."/>
            <person name="Thiruvilangam P."/>
            <person name="Bhonagiri V."/>
            <person name="Waters C."/>
            <person name="Tu K.C."/>
            <person name="Irgon J."/>
            <person name="Wilson R.K."/>
        </authorList>
    </citation>
    <scope>NUCLEOTIDE SEQUENCE [LARGE SCALE GENOMIC DNA]</scope>
    <source>
        <strain>ATCC BAA-1116 / BB120</strain>
    </source>
</reference>
<proteinExistence type="inferred from homology"/>
<organism>
    <name type="scientific">Vibrio campbellii (strain ATCC BAA-1116)</name>
    <dbReference type="NCBI Taxonomy" id="2902295"/>
    <lineage>
        <taxon>Bacteria</taxon>
        <taxon>Pseudomonadati</taxon>
        <taxon>Pseudomonadota</taxon>
        <taxon>Gammaproteobacteria</taxon>
        <taxon>Vibrionales</taxon>
        <taxon>Vibrionaceae</taxon>
        <taxon>Vibrio</taxon>
    </lineage>
</organism>
<gene>
    <name evidence="1" type="primary">cyoE1</name>
    <name type="ordered locus">VIBHAR_05495</name>
</gene>
<comment type="function">
    <text evidence="1">Converts heme B (protoheme IX) to heme O by substitution of the vinyl group on carbon 2 of heme B porphyrin ring with a hydroxyethyl farnesyl side group.</text>
</comment>
<comment type="catalytic activity">
    <reaction evidence="1">
        <text>heme b + (2E,6E)-farnesyl diphosphate + H2O = Fe(II)-heme o + diphosphate</text>
        <dbReference type="Rhea" id="RHEA:28070"/>
        <dbReference type="ChEBI" id="CHEBI:15377"/>
        <dbReference type="ChEBI" id="CHEBI:33019"/>
        <dbReference type="ChEBI" id="CHEBI:60344"/>
        <dbReference type="ChEBI" id="CHEBI:60530"/>
        <dbReference type="ChEBI" id="CHEBI:175763"/>
        <dbReference type="EC" id="2.5.1.141"/>
    </reaction>
</comment>
<comment type="pathway">
    <text evidence="1">Porphyrin-containing compound metabolism; heme O biosynthesis; heme O from protoheme: step 1/1.</text>
</comment>
<comment type="subcellular location">
    <subcellularLocation>
        <location evidence="1">Cell inner membrane</location>
        <topology evidence="1">Multi-pass membrane protein</topology>
    </subcellularLocation>
</comment>
<comment type="miscellaneous">
    <text evidence="1">Carbon 2 of the heme B porphyrin ring is defined according to the Fischer nomenclature.</text>
</comment>
<comment type="similarity">
    <text evidence="1">Belongs to the UbiA prenyltransferase family. Protoheme IX farnesyltransferase subfamily.</text>
</comment>
<keyword id="KW-0997">Cell inner membrane</keyword>
<keyword id="KW-1003">Cell membrane</keyword>
<keyword id="KW-0350">Heme biosynthesis</keyword>
<keyword id="KW-0472">Membrane</keyword>
<keyword id="KW-0808">Transferase</keyword>
<keyword id="KW-0812">Transmembrane</keyword>
<keyword id="KW-1133">Transmembrane helix</keyword>
<name>CYOE1_VIBC1</name>
<protein>
    <recommendedName>
        <fullName evidence="1">Protoheme IX farnesyltransferase 1</fullName>
        <ecNumber evidence="1">2.5.1.141</ecNumber>
    </recommendedName>
    <alternativeName>
        <fullName evidence="1">Heme B farnesyltransferase 1</fullName>
    </alternativeName>
    <alternativeName>
        <fullName evidence="1">Heme O synthase 1</fullName>
    </alternativeName>
</protein>
<dbReference type="EC" id="2.5.1.141" evidence="1"/>
<dbReference type="EMBL" id="CP000790">
    <property type="protein sequence ID" value="ABU73399.1"/>
    <property type="molecule type" value="Genomic_DNA"/>
</dbReference>
<dbReference type="RefSeq" id="WP_005532282.1">
    <property type="nucleotide sequence ID" value="NC_009784.1"/>
</dbReference>
<dbReference type="SMR" id="A7N2M2"/>
<dbReference type="KEGG" id="vha:VIBHAR_05495"/>
<dbReference type="PATRIC" id="fig|338187.25.peg.4756"/>
<dbReference type="UniPathway" id="UPA00834">
    <property type="reaction ID" value="UER00712"/>
</dbReference>
<dbReference type="Proteomes" id="UP000008152">
    <property type="component" value="Chromosome II"/>
</dbReference>
<dbReference type="GO" id="GO:0005886">
    <property type="term" value="C:plasma membrane"/>
    <property type="evidence" value="ECO:0007669"/>
    <property type="project" value="UniProtKB-SubCell"/>
</dbReference>
<dbReference type="GO" id="GO:0008495">
    <property type="term" value="F:protoheme IX farnesyltransferase activity"/>
    <property type="evidence" value="ECO:0007669"/>
    <property type="project" value="UniProtKB-UniRule"/>
</dbReference>
<dbReference type="GO" id="GO:0048034">
    <property type="term" value="P:heme O biosynthetic process"/>
    <property type="evidence" value="ECO:0007669"/>
    <property type="project" value="UniProtKB-UniRule"/>
</dbReference>
<dbReference type="CDD" id="cd13957">
    <property type="entry name" value="PT_UbiA_Cox10"/>
    <property type="match status" value="1"/>
</dbReference>
<dbReference type="FunFam" id="1.10.357.140:FF:000001">
    <property type="entry name" value="Protoheme IX farnesyltransferase"/>
    <property type="match status" value="1"/>
</dbReference>
<dbReference type="Gene3D" id="1.10.357.140">
    <property type="entry name" value="UbiA prenyltransferase"/>
    <property type="match status" value="1"/>
</dbReference>
<dbReference type="HAMAP" id="MF_00154">
    <property type="entry name" value="CyoE_CtaB"/>
    <property type="match status" value="1"/>
</dbReference>
<dbReference type="InterPro" id="IPR006369">
    <property type="entry name" value="Protohaem_IX_farnesylTrfase"/>
</dbReference>
<dbReference type="InterPro" id="IPR000537">
    <property type="entry name" value="UbiA_prenyltransferase"/>
</dbReference>
<dbReference type="InterPro" id="IPR030470">
    <property type="entry name" value="UbiA_prenylTrfase_CS"/>
</dbReference>
<dbReference type="InterPro" id="IPR044878">
    <property type="entry name" value="UbiA_sf"/>
</dbReference>
<dbReference type="NCBIfam" id="TIGR01473">
    <property type="entry name" value="cyoE_ctaB"/>
    <property type="match status" value="1"/>
</dbReference>
<dbReference type="NCBIfam" id="NF003348">
    <property type="entry name" value="PRK04375.1-1"/>
    <property type="match status" value="1"/>
</dbReference>
<dbReference type="PANTHER" id="PTHR43448">
    <property type="entry name" value="PROTOHEME IX FARNESYLTRANSFERASE, MITOCHONDRIAL"/>
    <property type="match status" value="1"/>
</dbReference>
<dbReference type="PANTHER" id="PTHR43448:SF2">
    <property type="entry name" value="PROTOHEME IX FARNESYLTRANSFERASE, MITOCHONDRIAL"/>
    <property type="match status" value="1"/>
</dbReference>
<dbReference type="Pfam" id="PF01040">
    <property type="entry name" value="UbiA"/>
    <property type="match status" value="1"/>
</dbReference>
<dbReference type="PROSITE" id="PS00943">
    <property type="entry name" value="UBIA"/>
    <property type="match status" value="1"/>
</dbReference>
<accession>A7N2M2</accession>
<feature type="chain" id="PRO_0000326962" description="Protoheme IX farnesyltransferase 1">
    <location>
        <begin position="1"/>
        <end position="290"/>
    </location>
</feature>
<feature type="transmembrane region" description="Helical" evidence="1">
    <location>
        <begin position="8"/>
        <end position="28"/>
    </location>
</feature>
<feature type="transmembrane region" description="Helical" evidence="1">
    <location>
        <begin position="36"/>
        <end position="56"/>
    </location>
</feature>
<feature type="transmembrane region" description="Helical" evidence="1">
    <location>
        <begin position="85"/>
        <end position="105"/>
    </location>
</feature>
<feature type="transmembrane region" description="Helical" evidence="1">
    <location>
        <begin position="108"/>
        <end position="128"/>
    </location>
</feature>
<feature type="transmembrane region" description="Helical" evidence="1">
    <location>
        <begin position="131"/>
        <end position="151"/>
    </location>
</feature>
<feature type="transmembrane region" description="Helical" evidence="1">
    <location>
        <begin position="152"/>
        <end position="172"/>
    </location>
</feature>
<feature type="transmembrane region" description="Helical" evidence="1">
    <location>
        <begin position="211"/>
        <end position="231"/>
    </location>
</feature>
<feature type="transmembrane region" description="Helical" evidence="1">
    <location>
        <begin position="269"/>
        <end position="289"/>
    </location>
</feature>
<sequence>MLKRYLSITKPGIIFGNLISVAAGFFLAAKSEPASFLLLLTTLVGVGLVIASGCVVNNIFDRDIDQKMKRTQNRELVMGNINTDAAFVYALVLLLNGTALLFQVVNPLSAVVVLLGYVFYVFFYTMWYKRNSVYGTLVGSISGAVPPLVGYLAVTNYISLEATLLFVMFCLWQMPHSYAIAMFRMQDYRDAGIPVLPVKEGIAKAHQHMKAYVVAFGVVAIGLFMLGEAGYEYLAVSAAVCFMWTRVTFQKVDYNNYIQWSKSVFKMSLLVVMGISGVLGLELIPLPFIH</sequence>